<sequence>MQAIFQALNFNPWTFLFQTLNLLVVMGLLYVFLYKPLGKVLADREARIEGNLNDAAAAREKAENILAEYRQQLQGARQEAQAILDRATKMAEETRAEIINRAREEAERTLAQARREIEGEKSKALAAIRSEAASLAILAAGKVLERSLTPDDQERLAREAIAEVERLQ</sequence>
<protein>
    <recommendedName>
        <fullName evidence="1">ATP synthase subunit b</fullName>
    </recommendedName>
    <alternativeName>
        <fullName evidence="1">ATP synthase F(0) sector subunit b</fullName>
    </alternativeName>
    <alternativeName>
        <fullName evidence="1">ATPase subunit I</fullName>
    </alternativeName>
    <alternativeName>
        <fullName evidence="1">F-type ATPase subunit b</fullName>
        <shortName evidence="1">F-ATPase subunit b</shortName>
    </alternativeName>
</protein>
<gene>
    <name evidence="1" type="primary">atpF</name>
    <name type="ordered locus">Moth_2382</name>
</gene>
<proteinExistence type="evidence at protein level"/>
<name>ATPF_MOOTA</name>
<comment type="function">
    <text evidence="1">F(1)F(0) ATP synthase produces ATP from ADP in the presence of a proton or sodium gradient. F-type ATPases consist of two structural domains, F(1) containing the extramembraneous catalytic core and F(0) containing the membrane proton channel, linked together by a central stalk and a peripheral stalk. During catalysis, ATP synthesis in the catalytic domain of F(1) is coupled via a rotary mechanism of the central stalk subunits to proton translocation.</text>
</comment>
<comment type="function">
    <text evidence="1">Component of the F(0) channel, it forms part of the peripheral stalk, linking F(1) to F(0).</text>
</comment>
<comment type="subunit">
    <text evidence="1">F-type ATPases have 2 components, F(1) - the catalytic core - and F(0) - the membrane proton channel. F(1) has five subunits: alpha(3), beta(3), gamma(1), delta(1), epsilon(1). F(0) has three main subunits: a(1), b(2) and c(10-14). The alpha and beta chains form an alternating ring which encloses part of the gamma chain. F(1) is attached to F(0) by a central stalk formed by the gamma and epsilon chains, while a peripheral stalk is formed by the delta and b chains.</text>
</comment>
<comment type="subcellular location">
    <subcellularLocation>
        <location evidence="1">Cell membrane</location>
        <topology evidence="1">Single-pass membrane protein</topology>
    </subcellularLocation>
</comment>
<comment type="similarity">
    <text evidence="1">Belongs to the ATPase B chain family.</text>
</comment>
<feature type="chain" id="PRO_0000368592" description="ATP synthase subunit b">
    <location>
        <begin position="1"/>
        <end position="168"/>
    </location>
</feature>
<feature type="transmembrane region" description="Helical" evidence="1">
    <location>
        <begin position="13"/>
        <end position="33"/>
    </location>
</feature>
<organism>
    <name type="scientific">Moorella thermoacetica (strain ATCC 39073 / JCM 9320)</name>
    <dbReference type="NCBI Taxonomy" id="264732"/>
    <lineage>
        <taxon>Bacteria</taxon>
        <taxon>Bacillati</taxon>
        <taxon>Bacillota</taxon>
        <taxon>Clostridia</taxon>
        <taxon>Moorellales</taxon>
        <taxon>Moorellaceae</taxon>
        <taxon>Moorella</taxon>
    </lineage>
</organism>
<dbReference type="EMBL" id="U64318">
    <property type="protein sequence ID" value="AAB51462.1"/>
    <property type="molecule type" value="Genomic_DNA"/>
</dbReference>
<dbReference type="EMBL" id="CP000232">
    <property type="protein sequence ID" value="ABC20664.1"/>
    <property type="molecule type" value="Genomic_DNA"/>
</dbReference>
<dbReference type="RefSeq" id="YP_431207.1">
    <property type="nucleotide sequence ID" value="NC_007644.1"/>
</dbReference>
<dbReference type="SMR" id="Q2RFX5"/>
<dbReference type="STRING" id="264732.Moth_2382"/>
<dbReference type="EnsemblBacteria" id="ABC20664">
    <property type="protein sequence ID" value="ABC20664"/>
    <property type="gene ID" value="Moth_2382"/>
</dbReference>
<dbReference type="GeneID" id="45618419"/>
<dbReference type="KEGG" id="mta:Moth_2382"/>
<dbReference type="PATRIC" id="fig|264732.11.peg.2595"/>
<dbReference type="eggNOG" id="COG0711">
    <property type="taxonomic scope" value="Bacteria"/>
</dbReference>
<dbReference type="HOGENOM" id="CLU_079215_4_4_9"/>
<dbReference type="OrthoDB" id="9795863at2"/>
<dbReference type="GO" id="GO:0005886">
    <property type="term" value="C:plasma membrane"/>
    <property type="evidence" value="ECO:0007669"/>
    <property type="project" value="UniProtKB-SubCell"/>
</dbReference>
<dbReference type="GO" id="GO:0045259">
    <property type="term" value="C:proton-transporting ATP synthase complex"/>
    <property type="evidence" value="ECO:0007669"/>
    <property type="project" value="UniProtKB-KW"/>
</dbReference>
<dbReference type="GO" id="GO:0046933">
    <property type="term" value="F:proton-transporting ATP synthase activity, rotational mechanism"/>
    <property type="evidence" value="ECO:0007669"/>
    <property type="project" value="UniProtKB-UniRule"/>
</dbReference>
<dbReference type="GO" id="GO:0046961">
    <property type="term" value="F:proton-transporting ATPase activity, rotational mechanism"/>
    <property type="evidence" value="ECO:0007669"/>
    <property type="project" value="TreeGrafter"/>
</dbReference>
<dbReference type="CDD" id="cd06503">
    <property type="entry name" value="ATP-synt_Fo_b"/>
    <property type="match status" value="1"/>
</dbReference>
<dbReference type="Gene3D" id="1.20.5.620">
    <property type="entry name" value="F1F0 ATP synthase subunit B, membrane domain"/>
    <property type="match status" value="1"/>
</dbReference>
<dbReference type="HAMAP" id="MF_01398">
    <property type="entry name" value="ATP_synth_b_bprime"/>
    <property type="match status" value="1"/>
</dbReference>
<dbReference type="InterPro" id="IPR028987">
    <property type="entry name" value="ATP_synth_B-like_membr_sf"/>
</dbReference>
<dbReference type="InterPro" id="IPR002146">
    <property type="entry name" value="ATP_synth_b/b'su_bac/chlpt"/>
</dbReference>
<dbReference type="InterPro" id="IPR005864">
    <property type="entry name" value="ATP_synth_F0_bsu_bac"/>
</dbReference>
<dbReference type="InterPro" id="IPR050059">
    <property type="entry name" value="ATP_synthase_B_chain"/>
</dbReference>
<dbReference type="NCBIfam" id="TIGR01144">
    <property type="entry name" value="ATP_synt_b"/>
    <property type="match status" value="1"/>
</dbReference>
<dbReference type="PANTHER" id="PTHR33445">
    <property type="entry name" value="ATP SYNTHASE SUBUNIT B', CHLOROPLASTIC"/>
    <property type="match status" value="1"/>
</dbReference>
<dbReference type="PANTHER" id="PTHR33445:SF2">
    <property type="entry name" value="ATP SYNTHASE SUBUNIT B', CHLOROPLASTIC"/>
    <property type="match status" value="1"/>
</dbReference>
<dbReference type="Pfam" id="PF00430">
    <property type="entry name" value="ATP-synt_B"/>
    <property type="match status" value="1"/>
</dbReference>
<dbReference type="SUPFAM" id="SSF81573">
    <property type="entry name" value="F1F0 ATP synthase subunit B, membrane domain"/>
    <property type="match status" value="1"/>
</dbReference>
<evidence type="ECO:0000255" key="1">
    <source>
        <dbReference type="HAMAP-Rule" id="MF_01398"/>
    </source>
</evidence>
<keyword id="KW-0066">ATP synthesis</keyword>
<keyword id="KW-1003">Cell membrane</keyword>
<keyword id="KW-0138">CF(0)</keyword>
<keyword id="KW-0375">Hydrogen ion transport</keyword>
<keyword id="KW-0406">Ion transport</keyword>
<keyword id="KW-0472">Membrane</keyword>
<keyword id="KW-0812">Transmembrane</keyword>
<keyword id="KW-1133">Transmembrane helix</keyword>
<keyword id="KW-0813">Transport</keyword>
<reference key="1">
    <citation type="journal article" date="1997" name="J. Bacteriol.">
        <title>Composition and primary structure of the F1F0 ATP synthase from the obligately anaerobic bacterium Clostridium thermoaceticum.</title>
        <authorList>
            <person name="Das A."/>
            <person name="Ljungdahl L.G."/>
        </authorList>
    </citation>
    <scope>NUCLEOTIDE SEQUENCE [GENOMIC DNA]</scope>
    <scope>SUBUNIT</scope>
    <scope>OPERON STRUCTURE</scope>
</reference>
<reference key="2">
    <citation type="journal article" date="2008" name="Environ. Microbiol.">
        <title>The complete genome sequence of Moorella thermoacetica (f. Clostridium thermoaceticum).</title>
        <authorList>
            <person name="Pierce E."/>
            <person name="Xie G."/>
            <person name="Barabote R.D."/>
            <person name="Saunders E."/>
            <person name="Han C.S."/>
            <person name="Detter J.C."/>
            <person name="Richardson P."/>
            <person name="Brettin T.S."/>
            <person name="Das A."/>
            <person name="Ljungdahl L.G."/>
            <person name="Ragsdale S.W."/>
        </authorList>
    </citation>
    <scope>NUCLEOTIDE SEQUENCE [LARGE SCALE GENOMIC DNA]</scope>
    <source>
        <strain>ATCC 39073 / JCM 9320</strain>
    </source>
</reference>
<accession>Q2RFX5</accession>
<accession>O05429</accession>